<sequence>MQTLKAKYNEQVRPALMQQFGYSSIMAVPRIEKIVINEGLGSSKDDSKAIDKAAKELALITLQKPVITKAKKSISNFKLRQGMPVGVKVTLRGERMYVFLEKLINIGLPRIRDFRGINPNSFDGRGNYNLGIKEQLIFPEITYDMVDKVRGMDITIVTTAKTDEEARALLQAMGLPFRK</sequence>
<reference key="1">
    <citation type="submission" date="2006-04" db="EMBL/GenBank/DDBJ databases">
        <title>Complete sequence of chromosome of Deinococcus geothermalis DSM 11300.</title>
        <authorList>
            <person name="Copeland A."/>
            <person name="Lucas S."/>
            <person name="Lapidus A."/>
            <person name="Barry K."/>
            <person name="Detter J.C."/>
            <person name="Glavina del Rio T."/>
            <person name="Hammon N."/>
            <person name="Israni S."/>
            <person name="Dalin E."/>
            <person name="Tice H."/>
            <person name="Pitluck S."/>
            <person name="Brettin T."/>
            <person name="Bruce D."/>
            <person name="Han C."/>
            <person name="Tapia R."/>
            <person name="Saunders E."/>
            <person name="Gilna P."/>
            <person name="Schmutz J."/>
            <person name="Larimer F."/>
            <person name="Land M."/>
            <person name="Hauser L."/>
            <person name="Kyrpides N."/>
            <person name="Kim E."/>
            <person name="Daly M.J."/>
            <person name="Fredrickson J.K."/>
            <person name="Makarova K.S."/>
            <person name="Gaidamakova E.K."/>
            <person name="Zhai M."/>
            <person name="Richardson P."/>
        </authorList>
    </citation>
    <scope>NUCLEOTIDE SEQUENCE [LARGE SCALE GENOMIC DNA]</scope>
    <source>
        <strain>DSM 11300 / CIP 105573 / AG-3a</strain>
    </source>
</reference>
<gene>
    <name evidence="1" type="primary">rplE</name>
    <name type="ordered locus">Dgeo_1855</name>
</gene>
<keyword id="KW-0687">Ribonucleoprotein</keyword>
<keyword id="KW-0689">Ribosomal protein</keyword>
<keyword id="KW-0694">RNA-binding</keyword>
<keyword id="KW-0699">rRNA-binding</keyword>
<keyword id="KW-0820">tRNA-binding</keyword>
<dbReference type="EMBL" id="CP000359">
    <property type="protein sequence ID" value="ABF46150.1"/>
    <property type="molecule type" value="Genomic_DNA"/>
</dbReference>
<dbReference type="RefSeq" id="WP_011530980.1">
    <property type="nucleotide sequence ID" value="NC_008025.1"/>
</dbReference>
<dbReference type="SMR" id="Q1IX84"/>
<dbReference type="STRING" id="319795.Dgeo_1855"/>
<dbReference type="KEGG" id="dge:Dgeo_1855"/>
<dbReference type="eggNOG" id="COG0094">
    <property type="taxonomic scope" value="Bacteria"/>
</dbReference>
<dbReference type="HOGENOM" id="CLU_061015_2_1_0"/>
<dbReference type="Proteomes" id="UP000002431">
    <property type="component" value="Chromosome"/>
</dbReference>
<dbReference type="GO" id="GO:1990904">
    <property type="term" value="C:ribonucleoprotein complex"/>
    <property type="evidence" value="ECO:0007669"/>
    <property type="project" value="UniProtKB-KW"/>
</dbReference>
<dbReference type="GO" id="GO:0005840">
    <property type="term" value="C:ribosome"/>
    <property type="evidence" value="ECO:0007669"/>
    <property type="project" value="UniProtKB-KW"/>
</dbReference>
<dbReference type="GO" id="GO:0019843">
    <property type="term" value="F:rRNA binding"/>
    <property type="evidence" value="ECO:0007669"/>
    <property type="project" value="UniProtKB-UniRule"/>
</dbReference>
<dbReference type="GO" id="GO:0003735">
    <property type="term" value="F:structural constituent of ribosome"/>
    <property type="evidence" value="ECO:0007669"/>
    <property type="project" value="InterPro"/>
</dbReference>
<dbReference type="GO" id="GO:0000049">
    <property type="term" value="F:tRNA binding"/>
    <property type="evidence" value="ECO:0007669"/>
    <property type="project" value="UniProtKB-UniRule"/>
</dbReference>
<dbReference type="GO" id="GO:0006412">
    <property type="term" value="P:translation"/>
    <property type="evidence" value="ECO:0007669"/>
    <property type="project" value="UniProtKB-UniRule"/>
</dbReference>
<dbReference type="FunFam" id="3.30.1440.10:FF:000001">
    <property type="entry name" value="50S ribosomal protein L5"/>
    <property type="match status" value="1"/>
</dbReference>
<dbReference type="Gene3D" id="3.30.1440.10">
    <property type="match status" value="1"/>
</dbReference>
<dbReference type="HAMAP" id="MF_01333_B">
    <property type="entry name" value="Ribosomal_uL5_B"/>
    <property type="match status" value="1"/>
</dbReference>
<dbReference type="InterPro" id="IPR002132">
    <property type="entry name" value="Ribosomal_uL5"/>
</dbReference>
<dbReference type="InterPro" id="IPR020930">
    <property type="entry name" value="Ribosomal_uL5_bac-type"/>
</dbReference>
<dbReference type="InterPro" id="IPR031309">
    <property type="entry name" value="Ribosomal_uL5_C"/>
</dbReference>
<dbReference type="InterPro" id="IPR022803">
    <property type="entry name" value="Ribosomal_uL5_dom_sf"/>
</dbReference>
<dbReference type="InterPro" id="IPR031310">
    <property type="entry name" value="Ribosomal_uL5_N"/>
</dbReference>
<dbReference type="NCBIfam" id="NF000585">
    <property type="entry name" value="PRK00010.1"/>
    <property type="match status" value="1"/>
</dbReference>
<dbReference type="PANTHER" id="PTHR11994">
    <property type="entry name" value="60S RIBOSOMAL PROTEIN L11-RELATED"/>
    <property type="match status" value="1"/>
</dbReference>
<dbReference type="Pfam" id="PF00281">
    <property type="entry name" value="Ribosomal_L5"/>
    <property type="match status" value="1"/>
</dbReference>
<dbReference type="Pfam" id="PF00673">
    <property type="entry name" value="Ribosomal_L5_C"/>
    <property type="match status" value="1"/>
</dbReference>
<dbReference type="PIRSF" id="PIRSF002161">
    <property type="entry name" value="Ribosomal_L5"/>
    <property type="match status" value="1"/>
</dbReference>
<dbReference type="SUPFAM" id="SSF55282">
    <property type="entry name" value="RL5-like"/>
    <property type="match status" value="1"/>
</dbReference>
<evidence type="ECO:0000255" key="1">
    <source>
        <dbReference type="HAMAP-Rule" id="MF_01333"/>
    </source>
</evidence>
<evidence type="ECO:0000305" key="2"/>
<comment type="function">
    <text evidence="1">This is one of the proteins that bind and probably mediate the attachment of the 5S RNA into the large ribosomal subunit, where it forms part of the central protuberance. In the 70S ribosome it contacts protein S13 of the 30S subunit (bridge B1b), connecting the 2 subunits; this bridge is implicated in subunit movement. Contacts the P site tRNA; the 5S rRNA and some of its associated proteins might help stabilize positioning of ribosome-bound tRNAs.</text>
</comment>
<comment type="subunit">
    <text evidence="1">Part of the 50S ribosomal subunit; part of the 5S rRNA/L5/L18/L25 subcomplex. Contacts the 5S rRNA and the P site tRNA. Forms a bridge to the 30S subunit in the 70S ribosome.</text>
</comment>
<comment type="similarity">
    <text evidence="1">Belongs to the universal ribosomal protein uL5 family.</text>
</comment>
<feature type="chain" id="PRO_1000052726" description="Large ribosomal subunit protein uL5">
    <location>
        <begin position="1"/>
        <end position="179"/>
    </location>
</feature>
<proteinExistence type="inferred from homology"/>
<organism>
    <name type="scientific">Deinococcus geothermalis (strain DSM 11300 / CIP 105573 / AG-3a)</name>
    <dbReference type="NCBI Taxonomy" id="319795"/>
    <lineage>
        <taxon>Bacteria</taxon>
        <taxon>Thermotogati</taxon>
        <taxon>Deinococcota</taxon>
        <taxon>Deinococci</taxon>
        <taxon>Deinococcales</taxon>
        <taxon>Deinococcaceae</taxon>
        <taxon>Deinococcus</taxon>
    </lineage>
</organism>
<protein>
    <recommendedName>
        <fullName evidence="1">Large ribosomal subunit protein uL5</fullName>
    </recommendedName>
    <alternativeName>
        <fullName evidence="2">50S ribosomal protein L5</fullName>
    </alternativeName>
</protein>
<accession>Q1IX84</accession>
<name>RL5_DEIGD</name>